<comment type="function">
    <text evidence="2">Regulates the transcription of the pyrimidine nucleotide (pyr) operon in response to exogenous pyrimidines.</text>
</comment>
<comment type="function">
    <text evidence="2">Also displays a weak uracil phosphoribosyltransferase activity which is not physiologically significant.</text>
</comment>
<comment type="catalytic activity">
    <reaction evidence="2">
        <text>UMP + diphosphate = 5-phospho-alpha-D-ribose 1-diphosphate + uracil</text>
        <dbReference type="Rhea" id="RHEA:13017"/>
        <dbReference type="ChEBI" id="CHEBI:17568"/>
        <dbReference type="ChEBI" id="CHEBI:33019"/>
        <dbReference type="ChEBI" id="CHEBI:57865"/>
        <dbReference type="ChEBI" id="CHEBI:58017"/>
        <dbReference type="EC" id="2.4.2.9"/>
    </reaction>
</comment>
<comment type="similarity">
    <text evidence="2">Belongs to the purine/pyrimidine phosphoribosyltransferase family. PyrR subfamily.</text>
</comment>
<name>PYRR_DEIRA</name>
<reference key="1">
    <citation type="journal article" date="1999" name="Science">
        <title>Genome sequence of the radioresistant bacterium Deinococcus radiodurans R1.</title>
        <authorList>
            <person name="White O."/>
            <person name="Eisen J.A."/>
            <person name="Heidelberg J.F."/>
            <person name="Hickey E.K."/>
            <person name="Peterson J.D."/>
            <person name="Dodson R.J."/>
            <person name="Haft D.H."/>
            <person name="Gwinn M.L."/>
            <person name="Nelson W.C."/>
            <person name="Richardson D.L."/>
            <person name="Moffat K.S."/>
            <person name="Qin H."/>
            <person name="Jiang L."/>
            <person name="Pamphile W."/>
            <person name="Crosby M."/>
            <person name="Shen M."/>
            <person name="Vamathevan J.J."/>
            <person name="Lam P."/>
            <person name="McDonald L.A."/>
            <person name="Utterback T.R."/>
            <person name="Zalewski C."/>
            <person name="Makarova K.S."/>
            <person name="Aravind L."/>
            <person name="Daly M.J."/>
            <person name="Minton K.W."/>
            <person name="Fleischmann R.D."/>
            <person name="Ketchum K.A."/>
            <person name="Nelson K.E."/>
            <person name="Salzberg S.L."/>
            <person name="Smith H.O."/>
            <person name="Venter J.C."/>
            <person name="Fraser C.M."/>
        </authorList>
    </citation>
    <scope>NUCLEOTIDE SEQUENCE [LARGE SCALE GENOMIC DNA]</scope>
    <source>
        <strain>ATCC 13939 / DSM 20539 / JCM 16871 / CCUG 27074 / LMG 4051 / NBRC 15346 / NCIMB 9279 / VKM B-1422 / R1</strain>
    </source>
</reference>
<gene>
    <name evidence="2" type="primary">pyrR</name>
    <name type="ordered locus">DR_1110</name>
</gene>
<feature type="chain" id="PRO_0000183034" description="Bifunctional protein PyrR">
    <location>
        <begin position="1"/>
        <end position="183"/>
    </location>
</feature>
<feature type="short sequence motif" description="PRPP-binding" evidence="2">
    <location>
        <begin position="100"/>
        <end position="112"/>
    </location>
</feature>
<feature type="binding site" evidence="1">
    <location>
        <begin position="42"/>
        <end position="43"/>
    </location>
    <ligand>
        <name>substrate</name>
    </ligand>
</feature>
<feature type="binding site" evidence="1">
    <location>
        <position position="87"/>
    </location>
    <ligand>
        <name>substrate</name>
    </ligand>
</feature>
<feature type="binding site" evidence="1">
    <location>
        <begin position="104"/>
        <end position="112"/>
    </location>
    <ligand>
        <name>substrate</name>
    </ligand>
</feature>
<feature type="binding site" evidence="1">
    <location>
        <position position="137"/>
    </location>
    <ligand>
        <name>substrate</name>
    </ligand>
</feature>
<feature type="binding site" evidence="1">
    <location>
        <position position="161"/>
    </location>
    <ligand>
        <name>substrate</name>
    </ligand>
</feature>
<accession>Q9RVB9</accession>
<protein>
    <recommendedName>
        <fullName evidence="2">Bifunctional protein PyrR</fullName>
    </recommendedName>
    <domain>
        <recommendedName>
            <fullName evidence="2">Pyrimidine operon regulatory protein</fullName>
        </recommendedName>
    </domain>
    <domain>
        <recommendedName>
            <fullName evidence="2">Uracil phosphoribosyltransferase</fullName>
            <shortName evidence="2">UPRTase</shortName>
            <ecNumber evidence="2">2.4.2.9</ecNumber>
        </recommendedName>
    </domain>
</protein>
<sequence length="183" mass="20397">MTAPKATILSSDEIRRALTRIAHEIIERNKGAENLAIIGVHTRGIPLAERLASKLSELEGVEVPRGMLDITLYRDDLSEVARQPIIRETQVPFDLADRRVILVDDVLYTGRTVRAALDALIDLGRPEGIQLAVLVDRGHRELPIRADYVGKNLPTAKHEVVKVKLQETDGTDIVELFDPEDLQ</sequence>
<dbReference type="EC" id="2.4.2.9" evidence="2"/>
<dbReference type="EMBL" id="AE000513">
    <property type="protein sequence ID" value="AAF10683.1"/>
    <property type="molecule type" value="Genomic_DNA"/>
</dbReference>
<dbReference type="PIR" id="E75435">
    <property type="entry name" value="E75435"/>
</dbReference>
<dbReference type="RefSeq" id="NP_294834.1">
    <property type="nucleotide sequence ID" value="NC_001263.1"/>
</dbReference>
<dbReference type="RefSeq" id="WP_010887753.1">
    <property type="nucleotide sequence ID" value="NC_001263.1"/>
</dbReference>
<dbReference type="SMR" id="Q9RVB9"/>
<dbReference type="FunCoup" id="Q9RVB9">
    <property type="interactions" value="190"/>
</dbReference>
<dbReference type="STRING" id="243230.DR_1110"/>
<dbReference type="PaxDb" id="243230-DR_1110"/>
<dbReference type="EnsemblBacteria" id="AAF10683">
    <property type="protein sequence ID" value="AAF10683"/>
    <property type="gene ID" value="DR_1110"/>
</dbReference>
<dbReference type="GeneID" id="69517356"/>
<dbReference type="KEGG" id="dra:DR_1110"/>
<dbReference type="PATRIC" id="fig|243230.17.peg.1306"/>
<dbReference type="eggNOG" id="COG2065">
    <property type="taxonomic scope" value="Bacteria"/>
</dbReference>
<dbReference type="HOGENOM" id="CLU_094234_2_1_0"/>
<dbReference type="InParanoid" id="Q9RVB9"/>
<dbReference type="OrthoDB" id="9802227at2"/>
<dbReference type="Proteomes" id="UP000002524">
    <property type="component" value="Chromosome 1"/>
</dbReference>
<dbReference type="GO" id="GO:0004845">
    <property type="term" value="F:uracil phosphoribosyltransferase activity"/>
    <property type="evidence" value="ECO:0007669"/>
    <property type="project" value="UniProtKB-UniRule"/>
</dbReference>
<dbReference type="GO" id="GO:0006355">
    <property type="term" value="P:regulation of DNA-templated transcription"/>
    <property type="evidence" value="ECO:0007669"/>
    <property type="project" value="UniProtKB-UniRule"/>
</dbReference>
<dbReference type="CDD" id="cd06223">
    <property type="entry name" value="PRTases_typeI"/>
    <property type="match status" value="1"/>
</dbReference>
<dbReference type="FunFam" id="3.40.50.2020:FF:000020">
    <property type="entry name" value="Bifunctional protein PyrR"/>
    <property type="match status" value="1"/>
</dbReference>
<dbReference type="Gene3D" id="3.40.50.2020">
    <property type="match status" value="1"/>
</dbReference>
<dbReference type="HAMAP" id="MF_01219">
    <property type="entry name" value="PyrR"/>
    <property type="match status" value="1"/>
</dbReference>
<dbReference type="InterPro" id="IPR000836">
    <property type="entry name" value="PRibTrfase_dom"/>
</dbReference>
<dbReference type="InterPro" id="IPR029057">
    <property type="entry name" value="PRTase-like"/>
</dbReference>
<dbReference type="InterPro" id="IPR023050">
    <property type="entry name" value="PyrR"/>
</dbReference>
<dbReference type="InterPro" id="IPR050137">
    <property type="entry name" value="PyrR_bifunctional"/>
</dbReference>
<dbReference type="NCBIfam" id="NF003545">
    <property type="entry name" value="PRK05205.1-1"/>
    <property type="match status" value="1"/>
</dbReference>
<dbReference type="NCBIfam" id="NF003547">
    <property type="entry name" value="PRK05205.1-3"/>
    <property type="match status" value="1"/>
</dbReference>
<dbReference type="NCBIfam" id="NF003548">
    <property type="entry name" value="PRK05205.1-4"/>
    <property type="match status" value="1"/>
</dbReference>
<dbReference type="NCBIfam" id="NF003549">
    <property type="entry name" value="PRK05205.1-5"/>
    <property type="match status" value="1"/>
</dbReference>
<dbReference type="PANTHER" id="PTHR11608">
    <property type="entry name" value="BIFUNCTIONAL PROTEIN PYRR"/>
    <property type="match status" value="1"/>
</dbReference>
<dbReference type="PANTHER" id="PTHR11608:SF0">
    <property type="entry name" value="BIFUNCTIONAL PROTEIN PYRR"/>
    <property type="match status" value="1"/>
</dbReference>
<dbReference type="Pfam" id="PF00156">
    <property type="entry name" value="Pribosyltran"/>
    <property type="match status" value="1"/>
</dbReference>
<dbReference type="SUPFAM" id="SSF53271">
    <property type="entry name" value="PRTase-like"/>
    <property type="match status" value="1"/>
</dbReference>
<organism>
    <name type="scientific">Deinococcus radiodurans (strain ATCC 13939 / DSM 20539 / JCM 16871 / CCUG 27074 / LMG 4051 / NBRC 15346 / NCIMB 9279 / VKM B-1422 / R1)</name>
    <dbReference type="NCBI Taxonomy" id="243230"/>
    <lineage>
        <taxon>Bacteria</taxon>
        <taxon>Thermotogati</taxon>
        <taxon>Deinococcota</taxon>
        <taxon>Deinococci</taxon>
        <taxon>Deinococcales</taxon>
        <taxon>Deinococcaceae</taxon>
        <taxon>Deinococcus</taxon>
    </lineage>
</organism>
<keyword id="KW-0328">Glycosyltransferase</keyword>
<keyword id="KW-1185">Reference proteome</keyword>
<keyword id="KW-0804">Transcription</keyword>
<keyword id="KW-0805">Transcription regulation</keyword>
<keyword id="KW-0808">Transferase</keyword>
<evidence type="ECO:0000250" key="1"/>
<evidence type="ECO:0000255" key="2">
    <source>
        <dbReference type="HAMAP-Rule" id="MF_01219"/>
    </source>
</evidence>
<proteinExistence type="inferred from homology"/>